<sequence>MKNVDDLIENAAELAERGLSKGEIADELNVSRETASWLVERSQPTDNSQSSSANNPTEAHDIHVDWSAVGRDSKRLTYIGQAMADLLMKEGEAVDLTIGIEKAGASLSTVVAQELDTDLGSYAPAKHQWDEGDIDELGGSFSRNFAQIRDRDCYIVDDTITSGTTMQETIDAIRDAGGRPVACVVVVDKQGVDSLADVPVYSLIDVVRVDSDTNDRDISNK</sequence>
<proteinExistence type="inferred from homology"/>
<name>GFCR_HALWD</name>
<reference key="1">
    <citation type="journal article" date="2006" name="BMC Genomics">
        <title>The genome of the square archaeon Haloquadratum walsbyi: life at the limits of water activity.</title>
        <authorList>
            <person name="Bolhuis H."/>
            <person name="Palm P."/>
            <person name="Wende A."/>
            <person name="Falb M."/>
            <person name="Rampp M."/>
            <person name="Rodriguez-Valera F."/>
            <person name="Pfeiffer F."/>
            <person name="Oesterhelt D."/>
        </authorList>
    </citation>
    <scope>NUCLEOTIDE SEQUENCE [LARGE SCALE GENOMIC DNA]</scope>
    <source>
        <strain>DSM 16790 / HBSQ001</strain>
    </source>
</reference>
<feature type="chain" id="PRO_0000298895" description="Transcriptional regulator GfcR">
    <location>
        <begin position="1"/>
        <end position="221"/>
    </location>
</feature>
<feature type="region of interest" description="Disordered" evidence="2">
    <location>
        <begin position="35"/>
        <end position="59"/>
    </location>
</feature>
<feature type="compositionally biased region" description="Polar residues" evidence="2">
    <location>
        <begin position="42"/>
        <end position="57"/>
    </location>
</feature>
<protein>
    <recommendedName>
        <fullName evidence="1">Transcriptional regulator GfcR</fullName>
    </recommendedName>
</protein>
<accession>Q18JL4</accession>
<dbReference type="EMBL" id="AM180088">
    <property type="protein sequence ID" value="CAJ51792.1"/>
    <property type="molecule type" value="Genomic_DNA"/>
</dbReference>
<dbReference type="RefSeq" id="WP_011570942.1">
    <property type="nucleotide sequence ID" value="NC_008212.1"/>
</dbReference>
<dbReference type="SMR" id="Q18JL4"/>
<dbReference type="STRING" id="362976.HQ_1664A"/>
<dbReference type="GeneID" id="4194549"/>
<dbReference type="KEGG" id="hwa:HQ_1664A"/>
<dbReference type="eggNOG" id="arCOG00028">
    <property type="taxonomic scope" value="Archaea"/>
</dbReference>
<dbReference type="HOGENOM" id="CLU_111001_0_0_2"/>
<dbReference type="Proteomes" id="UP000001975">
    <property type="component" value="Chromosome"/>
</dbReference>
<dbReference type="GO" id="GO:0003677">
    <property type="term" value="F:DNA binding"/>
    <property type="evidence" value="ECO:0007669"/>
    <property type="project" value="UniProtKB-UniRule"/>
</dbReference>
<dbReference type="GO" id="GO:0004588">
    <property type="term" value="F:orotate phosphoribosyltransferase activity"/>
    <property type="evidence" value="ECO:0007669"/>
    <property type="project" value="TreeGrafter"/>
</dbReference>
<dbReference type="GO" id="GO:0019856">
    <property type="term" value="P:pyrimidine nucleobase biosynthetic process"/>
    <property type="evidence" value="ECO:0007669"/>
    <property type="project" value="TreeGrafter"/>
</dbReference>
<dbReference type="GO" id="GO:0010468">
    <property type="term" value="P:regulation of gene expression"/>
    <property type="evidence" value="ECO:0007669"/>
    <property type="project" value="UniProtKB-UniRule"/>
</dbReference>
<dbReference type="GO" id="GO:0006222">
    <property type="term" value="P:UMP biosynthetic process"/>
    <property type="evidence" value="ECO:0007669"/>
    <property type="project" value="TreeGrafter"/>
</dbReference>
<dbReference type="CDD" id="cd06223">
    <property type="entry name" value="PRTases_typeI"/>
    <property type="match status" value="1"/>
</dbReference>
<dbReference type="Gene3D" id="3.40.50.2020">
    <property type="match status" value="1"/>
</dbReference>
<dbReference type="Gene3D" id="1.10.10.60">
    <property type="entry name" value="Homeodomain-like"/>
    <property type="match status" value="1"/>
</dbReference>
<dbReference type="HAMAP" id="MF_01214">
    <property type="entry name" value="GfcR"/>
    <property type="match status" value="1"/>
</dbReference>
<dbReference type="InterPro" id="IPR053401">
    <property type="entry name" value="GcfR_halob"/>
</dbReference>
<dbReference type="InterPro" id="IPR022854">
    <property type="entry name" value="GfcR-like"/>
</dbReference>
<dbReference type="InterPro" id="IPR000836">
    <property type="entry name" value="PRibTrfase_dom"/>
</dbReference>
<dbReference type="InterPro" id="IPR029057">
    <property type="entry name" value="PRTase-like"/>
</dbReference>
<dbReference type="NCBIfam" id="NF002620">
    <property type="entry name" value="PRK02277.1"/>
    <property type="match status" value="1"/>
</dbReference>
<dbReference type="NCBIfam" id="NF045507">
    <property type="entry name" value="transregGfcR_Halo"/>
    <property type="match status" value="1"/>
</dbReference>
<dbReference type="PANTHER" id="PTHR19278">
    <property type="entry name" value="OROTATE PHOSPHORIBOSYLTRANSFERASE"/>
    <property type="match status" value="1"/>
</dbReference>
<dbReference type="PANTHER" id="PTHR19278:SF41">
    <property type="entry name" value="PYRE-LIKE PROTEIN"/>
    <property type="match status" value="1"/>
</dbReference>
<dbReference type="Pfam" id="PF00156">
    <property type="entry name" value="Pribosyltran"/>
    <property type="match status" value="1"/>
</dbReference>
<dbReference type="SUPFAM" id="SSF53271">
    <property type="entry name" value="PRTase-like"/>
    <property type="match status" value="1"/>
</dbReference>
<comment type="function">
    <text evidence="1">DNA-binding transcriptional regulator that functions as a regulator of central sugar catabolic pathways.</text>
</comment>
<comment type="domain">
    <text evidence="1">Contains an N-terminal DNA-binding winged helix-turn-helix domain and a C-terminal regulatory domain (or effector binding domain) resembling phosphoribosyltransferase (PRT) domain.</text>
</comment>
<comment type="similarity">
    <text evidence="1">Belongs to the purine/pyrimidine phosphoribosyltransferase family. GfcR subfamily.</text>
</comment>
<gene>
    <name evidence="1" type="primary">gfcR</name>
    <name evidence="3" type="synonym">pyrE1</name>
    <name type="ordered locus">HQ_1664A</name>
</gene>
<evidence type="ECO:0000255" key="1">
    <source>
        <dbReference type="HAMAP-Rule" id="MF_01214"/>
    </source>
</evidence>
<evidence type="ECO:0000256" key="2">
    <source>
        <dbReference type="SAM" id="MobiDB-lite"/>
    </source>
</evidence>
<evidence type="ECO:0000312" key="3">
    <source>
        <dbReference type="EMBL" id="CAJ51792.1"/>
    </source>
</evidence>
<keyword id="KW-0238">DNA-binding</keyword>
<keyword id="KW-1185">Reference proteome</keyword>
<keyword id="KW-0804">Transcription</keyword>
<keyword id="KW-0805">Transcription regulation</keyword>
<organism>
    <name type="scientific">Haloquadratum walsbyi (strain DSM 16790 / HBSQ001)</name>
    <dbReference type="NCBI Taxonomy" id="362976"/>
    <lineage>
        <taxon>Archaea</taxon>
        <taxon>Methanobacteriati</taxon>
        <taxon>Methanobacteriota</taxon>
        <taxon>Stenosarchaea group</taxon>
        <taxon>Halobacteria</taxon>
        <taxon>Halobacteriales</taxon>
        <taxon>Haloferacaceae</taxon>
        <taxon>Haloquadratum</taxon>
    </lineage>
</organism>